<geneLocation type="plasmid">
    <name>IncP-beta R751</name>
</geneLocation>
<accession>Q00187</accession>
<accession>P71197</accession>
<protein>
    <recommendedName>
        <fullName>Protein TraL</fullName>
    </recommendedName>
</protein>
<sequence>MAKIHMVLQGKGGVGKSMIAATIAQYKAGKGQKPLCIDTDPVNATFEGYKALNVRRLNIMDGDDINTRNFDALVEMIASAEGDVIIDNGASSFVPLSHYLISNQVPALLQDMGHELVVHTVVTGGQALVDTVSGFAQLASQFPAECLFVVWLNPYWGPIEHEGKGFEQLKAYTANKGRVSAIIQIPALKEETYGRDFAEMLQDRRTFDEALADSALTIMTRQRLKIVKTQLFAQLENAAVL</sequence>
<dbReference type="EMBL" id="U67194">
    <property type="protein sequence ID" value="AAC64480.1"/>
    <property type="molecule type" value="Genomic_DNA"/>
</dbReference>
<dbReference type="EMBL" id="X54458">
    <property type="protein sequence ID" value="CAA38333.1"/>
    <property type="molecule type" value="Genomic_DNA"/>
</dbReference>
<dbReference type="PIR" id="S22998">
    <property type="entry name" value="S22998"/>
</dbReference>
<dbReference type="SMR" id="Q00187"/>
<dbReference type="CDD" id="cd05386">
    <property type="entry name" value="TraL"/>
    <property type="match status" value="1"/>
</dbReference>
<dbReference type="Gene3D" id="3.40.50.300">
    <property type="entry name" value="P-loop containing nucleotide triphosphate hydrolases"/>
    <property type="match status" value="1"/>
</dbReference>
<dbReference type="InterPro" id="IPR002586">
    <property type="entry name" value="CobQ/CobB/MinD/ParA_Nub-bd_dom"/>
</dbReference>
<dbReference type="InterPro" id="IPR027417">
    <property type="entry name" value="P-loop_NTPase"/>
</dbReference>
<dbReference type="NCBIfam" id="NF010461">
    <property type="entry name" value="PRK13886.1"/>
    <property type="match status" value="1"/>
</dbReference>
<dbReference type="Pfam" id="PF01656">
    <property type="entry name" value="CbiA"/>
    <property type="match status" value="1"/>
</dbReference>
<dbReference type="SUPFAM" id="SSF52540">
    <property type="entry name" value="P-loop containing nucleoside triphosphate hydrolases"/>
    <property type="match status" value="1"/>
</dbReference>
<gene>
    <name type="primary">traL</name>
</gene>
<comment type="similarity">
    <text evidence="1">To plasmid IncP-alpha RP4 TraL.</text>
</comment>
<feature type="chain" id="PRO_0000068601" description="Protein TraL">
    <location>
        <begin position="1"/>
        <end position="241"/>
    </location>
</feature>
<organism>
    <name type="scientific">Escherichia coli</name>
    <dbReference type="NCBI Taxonomy" id="562"/>
    <lineage>
        <taxon>Bacteria</taxon>
        <taxon>Pseudomonadati</taxon>
        <taxon>Pseudomonadota</taxon>
        <taxon>Gammaproteobacteria</taxon>
        <taxon>Enterobacterales</taxon>
        <taxon>Enterobacteriaceae</taxon>
        <taxon>Escherichia</taxon>
    </lineage>
</organism>
<name>TRAL5_ECOLX</name>
<reference key="1">
    <citation type="submission" date="1996-08" db="EMBL/GenBank/DDBJ databases">
        <authorList>
            <person name="Thomas C.M."/>
        </authorList>
    </citation>
    <scope>NUCLEOTIDE SEQUENCE [GENOMIC DNA]</scope>
</reference>
<reference key="2">
    <citation type="journal article" date="1991" name="DNA Seq.">
        <title>Nucleotide sequence and organization of genes flanking the transfer origin of promiscuous plasmid RP4.</title>
        <authorList>
            <person name="Ziegelin G."/>
            <person name="Pansegrau W."/>
            <person name="Strack B."/>
            <person name="Balzer D."/>
            <person name="Kroeger M."/>
            <person name="Kruft V."/>
            <person name="Lanka E."/>
        </authorList>
    </citation>
    <scope>NUCLEOTIDE SEQUENCE [GENOMIC DNA] OF 1-48</scope>
    <source>
        <strain>ATCC 33694 / HB101</strain>
    </source>
</reference>
<evidence type="ECO:0000305" key="1"/>
<keyword id="KW-0184">Conjugation</keyword>
<keyword id="KW-0614">Plasmid</keyword>
<proteinExistence type="predicted"/>